<keyword id="KW-0010">Activator</keyword>
<keyword id="KW-0238">DNA-binding</keyword>
<keyword id="KW-1017">Isopeptide bond</keyword>
<keyword id="KW-0539">Nucleus</keyword>
<keyword id="KW-0597">Phosphoprotein</keyword>
<keyword id="KW-1185">Reference proteome</keyword>
<keyword id="KW-0804">Transcription</keyword>
<keyword id="KW-0805">Transcription regulation</keyword>
<keyword id="KW-0832">Ubl conjugation</keyword>
<reference key="1">
    <citation type="journal article" date="1996" name="Exp. Cell Res.">
        <title>AP-2.2: a novel AP-2-related transcription factor induced by retinoic acid during differentiation of P19 embryonal carcinoma cells.</title>
        <authorList>
            <person name="Oulad-Abdelghani M."/>
            <person name="Bouillet P."/>
            <person name="Chazaud C."/>
            <person name="Dolle P."/>
            <person name="Chambon P."/>
        </authorList>
    </citation>
    <scope>NUCLEOTIDE SEQUENCE [MRNA]</scope>
    <scope>FUNCTION</scope>
    <scope>TISSUE SPECIFICITY</scope>
    <scope>INDUCTION</scope>
    <source>
        <tissue>Embryonic carcinoma</tissue>
    </source>
</reference>
<reference key="2">
    <citation type="journal article" date="2005" name="Science">
        <title>The transcriptional landscape of the mammalian genome.</title>
        <authorList>
            <person name="Carninci P."/>
            <person name="Kasukawa T."/>
            <person name="Katayama S."/>
            <person name="Gough J."/>
            <person name="Frith M.C."/>
            <person name="Maeda N."/>
            <person name="Oyama R."/>
            <person name="Ravasi T."/>
            <person name="Lenhard B."/>
            <person name="Wells C."/>
            <person name="Kodzius R."/>
            <person name="Shimokawa K."/>
            <person name="Bajic V.B."/>
            <person name="Brenner S.E."/>
            <person name="Batalov S."/>
            <person name="Forrest A.R."/>
            <person name="Zavolan M."/>
            <person name="Davis M.J."/>
            <person name="Wilming L.G."/>
            <person name="Aidinis V."/>
            <person name="Allen J.E."/>
            <person name="Ambesi-Impiombato A."/>
            <person name="Apweiler R."/>
            <person name="Aturaliya R.N."/>
            <person name="Bailey T.L."/>
            <person name="Bansal M."/>
            <person name="Baxter L."/>
            <person name="Beisel K.W."/>
            <person name="Bersano T."/>
            <person name="Bono H."/>
            <person name="Chalk A.M."/>
            <person name="Chiu K.P."/>
            <person name="Choudhary V."/>
            <person name="Christoffels A."/>
            <person name="Clutterbuck D.R."/>
            <person name="Crowe M.L."/>
            <person name="Dalla E."/>
            <person name="Dalrymple B.P."/>
            <person name="de Bono B."/>
            <person name="Della Gatta G."/>
            <person name="di Bernardo D."/>
            <person name="Down T."/>
            <person name="Engstrom P."/>
            <person name="Fagiolini M."/>
            <person name="Faulkner G."/>
            <person name="Fletcher C.F."/>
            <person name="Fukushima T."/>
            <person name="Furuno M."/>
            <person name="Futaki S."/>
            <person name="Gariboldi M."/>
            <person name="Georgii-Hemming P."/>
            <person name="Gingeras T.R."/>
            <person name="Gojobori T."/>
            <person name="Green R.E."/>
            <person name="Gustincich S."/>
            <person name="Harbers M."/>
            <person name="Hayashi Y."/>
            <person name="Hensch T.K."/>
            <person name="Hirokawa N."/>
            <person name="Hill D."/>
            <person name="Huminiecki L."/>
            <person name="Iacono M."/>
            <person name="Ikeo K."/>
            <person name="Iwama A."/>
            <person name="Ishikawa T."/>
            <person name="Jakt M."/>
            <person name="Kanapin A."/>
            <person name="Katoh M."/>
            <person name="Kawasawa Y."/>
            <person name="Kelso J."/>
            <person name="Kitamura H."/>
            <person name="Kitano H."/>
            <person name="Kollias G."/>
            <person name="Krishnan S.P."/>
            <person name="Kruger A."/>
            <person name="Kummerfeld S.K."/>
            <person name="Kurochkin I.V."/>
            <person name="Lareau L.F."/>
            <person name="Lazarevic D."/>
            <person name="Lipovich L."/>
            <person name="Liu J."/>
            <person name="Liuni S."/>
            <person name="McWilliam S."/>
            <person name="Madan Babu M."/>
            <person name="Madera M."/>
            <person name="Marchionni L."/>
            <person name="Matsuda H."/>
            <person name="Matsuzawa S."/>
            <person name="Miki H."/>
            <person name="Mignone F."/>
            <person name="Miyake S."/>
            <person name="Morris K."/>
            <person name="Mottagui-Tabar S."/>
            <person name="Mulder N."/>
            <person name="Nakano N."/>
            <person name="Nakauchi H."/>
            <person name="Ng P."/>
            <person name="Nilsson R."/>
            <person name="Nishiguchi S."/>
            <person name="Nishikawa S."/>
            <person name="Nori F."/>
            <person name="Ohara O."/>
            <person name="Okazaki Y."/>
            <person name="Orlando V."/>
            <person name="Pang K.C."/>
            <person name="Pavan W.J."/>
            <person name="Pavesi G."/>
            <person name="Pesole G."/>
            <person name="Petrovsky N."/>
            <person name="Piazza S."/>
            <person name="Reed J."/>
            <person name="Reid J.F."/>
            <person name="Ring B.Z."/>
            <person name="Ringwald M."/>
            <person name="Rost B."/>
            <person name="Ruan Y."/>
            <person name="Salzberg S.L."/>
            <person name="Sandelin A."/>
            <person name="Schneider C."/>
            <person name="Schoenbach C."/>
            <person name="Sekiguchi K."/>
            <person name="Semple C.A."/>
            <person name="Seno S."/>
            <person name="Sessa L."/>
            <person name="Sheng Y."/>
            <person name="Shibata Y."/>
            <person name="Shimada H."/>
            <person name="Shimada K."/>
            <person name="Silva D."/>
            <person name="Sinclair B."/>
            <person name="Sperling S."/>
            <person name="Stupka E."/>
            <person name="Sugiura K."/>
            <person name="Sultana R."/>
            <person name="Takenaka Y."/>
            <person name="Taki K."/>
            <person name="Tammoja K."/>
            <person name="Tan S.L."/>
            <person name="Tang S."/>
            <person name="Taylor M.S."/>
            <person name="Tegner J."/>
            <person name="Teichmann S.A."/>
            <person name="Ueda H.R."/>
            <person name="van Nimwegen E."/>
            <person name="Verardo R."/>
            <person name="Wei C.L."/>
            <person name="Yagi K."/>
            <person name="Yamanishi H."/>
            <person name="Zabarovsky E."/>
            <person name="Zhu S."/>
            <person name="Zimmer A."/>
            <person name="Hide W."/>
            <person name="Bult C."/>
            <person name="Grimmond S.M."/>
            <person name="Teasdale R.D."/>
            <person name="Liu E.T."/>
            <person name="Brusic V."/>
            <person name="Quackenbush J."/>
            <person name="Wahlestedt C."/>
            <person name="Mattick J.S."/>
            <person name="Hume D.A."/>
            <person name="Kai C."/>
            <person name="Sasaki D."/>
            <person name="Tomaru Y."/>
            <person name="Fukuda S."/>
            <person name="Kanamori-Katayama M."/>
            <person name="Suzuki M."/>
            <person name="Aoki J."/>
            <person name="Arakawa T."/>
            <person name="Iida J."/>
            <person name="Imamura K."/>
            <person name="Itoh M."/>
            <person name="Kato T."/>
            <person name="Kawaji H."/>
            <person name="Kawagashira N."/>
            <person name="Kawashima T."/>
            <person name="Kojima M."/>
            <person name="Kondo S."/>
            <person name="Konno H."/>
            <person name="Nakano K."/>
            <person name="Ninomiya N."/>
            <person name="Nishio T."/>
            <person name="Okada M."/>
            <person name="Plessy C."/>
            <person name="Shibata K."/>
            <person name="Shiraki T."/>
            <person name="Suzuki S."/>
            <person name="Tagami M."/>
            <person name="Waki K."/>
            <person name="Watahiki A."/>
            <person name="Okamura-Oho Y."/>
            <person name="Suzuki H."/>
            <person name="Kawai J."/>
            <person name="Hayashizaki Y."/>
        </authorList>
    </citation>
    <scope>NUCLEOTIDE SEQUENCE [LARGE SCALE MRNA]</scope>
    <source>
        <tissue>Mammary gland</tissue>
    </source>
</reference>
<reference key="3">
    <citation type="journal article" date="2009" name="PLoS Biol.">
        <title>Lineage-specific biology revealed by a finished genome assembly of the mouse.</title>
        <authorList>
            <person name="Church D.M."/>
            <person name="Goodstadt L."/>
            <person name="Hillier L.W."/>
            <person name="Zody M.C."/>
            <person name="Goldstein S."/>
            <person name="She X."/>
            <person name="Bult C.J."/>
            <person name="Agarwala R."/>
            <person name="Cherry J.L."/>
            <person name="DiCuccio M."/>
            <person name="Hlavina W."/>
            <person name="Kapustin Y."/>
            <person name="Meric P."/>
            <person name="Maglott D."/>
            <person name="Birtle Z."/>
            <person name="Marques A.C."/>
            <person name="Graves T."/>
            <person name="Zhou S."/>
            <person name="Teague B."/>
            <person name="Potamousis K."/>
            <person name="Churas C."/>
            <person name="Place M."/>
            <person name="Herschleb J."/>
            <person name="Runnheim R."/>
            <person name="Forrest D."/>
            <person name="Amos-Landgraf J."/>
            <person name="Schwartz D.C."/>
            <person name="Cheng Z."/>
            <person name="Lindblad-Toh K."/>
            <person name="Eichler E.E."/>
            <person name="Ponting C.P."/>
        </authorList>
    </citation>
    <scope>NUCLEOTIDE SEQUENCE [LARGE SCALE GENOMIC DNA]</scope>
    <source>
        <strain>C57BL/6J</strain>
    </source>
</reference>
<reference key="4">
    <citation type="submission" date="2005-07" db="EMBL/GenBank/DDBJ databases">
        <authorList>
            <person name="Mural R.J."/>
            <person name="Adams M.D."/>
            <person name="Myers E.W."/>
            <person name="Smith H.O."/>
            <person name="Venter J.C."/>
        </authorList>
    </citation>
    <scope>NUCLEOTIDE SEQUENCE [LARGE SCALE GENOMIC DNA]</scope>
</reference>
<reference key="5">
    <citation type="journal article" date="2004" name="Genome Res.">
        <title>The status, quality, and expansion of the NIH full-length cDNA project: the Mammalian Gene Collection (MGC).</title>
        <authorList>
            <consortium name="The MGC Project Team"/>
        </authorList>
    </citation>
    <scope>NUCLEOTIDE SEQUENCE [LARGE SCALE MRNA]</scope>
    <source>
        <strain>FVB/N</strain>
        <tissue>Mammary tumor</tissue>
    </source>
</reference>
<reference key="6">
    <citation type="journal article" date="2002" name="Genomics">
        <title>Cloning of mouse Cited4, a member of the CITED family p300/CBP-binding transcriptional coactivators: induced expression in mammary epithelial cells.</title>
        <authorList>
            <person name="Yahata T."/>
            <person name="Takedatsu H."/>
            <person name="Dunwoodie S.L."/>
            <person name="Braganca J."/>
            <person name="Swingler T."/>
            <person name="Withington S.L."/>
            <person name="Hur J."/>
            <person name="Coser K.R."/>
            <person name="Isselbacher K.J."/>
            <person name="Bhattacharya S."/>
            <person name="Shioda T."/>
        </authorList>
    </citation>
    <scope>INTERACTION WITH CITED4</scope>
</reference>
<reference key="7">
    <citation type="journal article" date="2024" name="Nat. Struct. Mol. Biol.">
        <title>Lineage regulators TFAP2C and NR5A2 function as bipotency activators in totipotent embryos.</title>
        <authorList>
            <person name="Li L."/>
            <person name="Lai F."/>
            <person name="Liu L."/>
            <person name="Lu X."/>
            <person name="Hu X."/>
            <person name="Liu B."/>
            <person name="Lin Z."/>
            <person name="Fan Q."/>
            <person name="Kong F."/>
            <person name="Xu Q."/>
            <person name="Xie W."/>
        </authorList>
    </citation>
    <scope>FUNCTION</scope>
</reference>
<dbReference type="EMBL" id="X94694">
    <property type="protein sequence ID" value="CAA64357.1"/>
    <property type="molecule type" value="mRNA"/>
</dbReference>
<dbReference type="EMBL" id="AK145166">
    <property type="protein sequence ID" value="BAE26271.1"/>
    <property type="molecule type" value="mRNA"/>
</dbReference>
<dbReference type="EMBL" id="AL833787">
    <property type="status" value="NOT_ANNOTATED_CDS"/>
    <property type="molecule type" value="Genomic_DNA"/>
</dbReference>
<dbReference type="EMBL" id="CH466551">
    <property type="protein sequence ID" value="EDL06609.1"/>
    <property type="molecule type" value="Genomic_DNA"/>
</dbReference>
<dbReference type="EMBL" id="BC003778">
    <property type="protein sequence ID" value="AAH03778.1"/>
    <property type="molecule type" value="mRNA"/>
</dbReference>
<dbReference type="CCDS" id="CCDS17135.1"/>
<dbReference type="RefSeq" id="NP_001153168.1">
    <property type="nucleotide sequence ID" value="NM_001159696.1"/>
</dbReference>
<dbReference type="RefSeq" id="NP_033361.2">
    <property type="nucleotide sequence ID" value="NM_009335.2"/>
</dbReference>
<dbReference type="SMR" id="Q61312"/>
<dbReference type="BioGRID" id="204013">
    <property type="interactions" value="6"/>
</dbReference>
<dbReference type="FunCoup" id="Q61312">
    <property type="interactions" value="1980"/>
</dbReference>
<dbReference type="STRING" id="10090.ENSMUSP00000129922"/>
<dbReference type="iPTMnet" id="Q61312"/>
<dbReference type="PhosphoSitePlus" id="Q61312"/>
<dbReference type="PaxDb" id="10090-ENSMUSP00000030391"/>
<dbReference type="ProteomicsDB" id="296264"/>
<dbReference type="Antibodypedia" id="4230">
    <property type="antibodies" value="428 antibodies from 41 providers"/>
</dbReference>
<dbReference type="DNASU" id="21420"/>
<dbReference type="Ensembl" id="ENSMUST00000030391.9">
    <property type="protein sequence ID" value="ENSMUSP00000030391.3"/>
    <property type="gene ID" value="ENSMUSG00000028640.12"/>
</dbReference>
<dbReference type="GeneID" id="21420"/>
<dbReference type="KEGG" id="mmu:21420"/>
<dbReference type="UCSC" id="uc008ocz.2">
    <property type="organism name" value="mouse"/>
</dbReference>
<dbReference type="AGR" id="MGI:106032"/>
<dbReference type="CTD" id="7022"/>
<dbReference type="MGI" id="MGI:106032">
    <property type="gene designation" value="Tfap2c"/>
</dbReference>
<dbReference type="VEuPathDB" id="HostDB:ENSMUSG00000028640"/>
<dbReference type="eggNOG" id="KOG3811">
    <property type="taxonomic scope" value="Eukaryota"/>
</dbReference>
<dbReference type="GeneTree" id="ENSGT00950000182848"/>
<dbReference type="HOGENOM" id="CLU_035175_4_1_1"/>
<dbReference type="InParanoid" id="Q61312"/>
<dbReference type="OMA" id="EANIQGC"/>
<dbReference type="OrthoDB" id="20408at9989"/>
<dbReference type="TreeFam" id="TF313718"/>
<dbReference type="Reactome" id="R-MMU-3232118">
    <property type="pathway name" value="SUMOylation of transcription factors"/>
</dbReference>
<dbReference type="Reactome" id="R-MMU-8866904">
    <property type="pathway name" value="Negative regulation of activity of TFAP2 (AP-2) family transcription factors"/>
</dbReference>
<dbReference type="Reactome" id="R-MMU-8866907">
    <property type="pathway name" value="Activation of the TFAP2 (AP-2) family of transcription factors"/>
</dbReference>
<dbReference type="Reactome" id="R-MMU-8866911">
    <property type="pathway name" value="TFAP2 (AP-2) family regulates transcription of cell cycle factors"/>
</dbReference>
<dbReference type="Reactome" id="R-MMU-9834899">
    <property type="pathway name" value="Specification of the neural plate border"/>
</dbReference>
<dbReference type="BioGRID-ORCS" id="21420">
    <property type="hits" value="2 hits in 76 CRISPR screens"/>
</dbReference>
<dbReference type="ChiTaRS" id="Tfap2c">
    <property type="organism name" value="mouse"/>
</dbReference>
<dbReference type="PRO" id="PR:Q61312"/>
<dbReference type="Proteomes" id="UP000000589">
    <property type="component" value="Chromosome 2"/>
</dbReference>
<dbReference type="RNAct" id="Q61312">
    <property type="molecule type" value="protein"/>
</dbReference>
<dbReference type="Bgee" id="ENSMUSG00000028640">
    <property type="expression patterns" value="Expressed in ectoplacental cone and 239 other cell types or tissues"/>
</dbReference>
<dbReference type="ExpressionAtlas" id="Q61312">
    <property type="expression patterns" value="baseline and differential"/>
</dbReference>
<dbReference type="GO" id="GO:0005739">
    <property type="term" value="C:mitochondrion"/>
    <property type="evidence" value="ECO:0007669"/>
    <property type="project" value="Ensembl"/>
</dbReference>
<dbReference type="GO" id="GO:0005654">
    <property type="term" value="C:nucleoplasm"/>
    <property type="evidence" value="ECO:0007669"/>
    <property type="project" value="Ensembl"/>
</dbReference>
<dbReference type="GO" id="GO:0005634">
    <property type="term" value="C:nucleus"/>
    <property type="evidence" value="ECO:0000314"/>
    <property type="project" value="MGI"/>
</dbReference>
<dbReference type="GO" id="GO:0003677">
    <property type="term" value="F:DNA binding"/>
    <property type="evidence" value="ECO:0000314"/>
    <property type="project" value="MGI"/>
</dbReference>
<dbReference type="GO" id="GO:0001228">
    <property type="term" value="F:DNA-binding transcription activator activity, RNA polymerase II-specific"/>
    <property type="evidence" value="ECO:0007669"/>
    <property type="project" value="Ensembl"/>
</dbReference>
<dbReference type="GO" id="GO:0003700">
    <property type="term" value="F:DNA-binding transcription factor activity"/>
    <property type="evidence" value="ECO:0000314"/>
    <property type="project" value="MGI"/>
</dbReference>
<dbReference type="GO" id="GO:0000981">
    <property type="term" value="F:DNA-binding transcription factor activity, RNA polymerase II-specific"/>
    <property type="evidence" value="ECO:0000314"/>
    <property type="project" value="MGI"/>
</dbReference>
<dbReference type="GO" id="GO:0001227">
    <property type="term" value="F:DNA-binding transcription repressor activity, RNA polymerase II-specific"/>
    <property type="evidence" value="ECO:0007669"/>
    <property type="project" value="Ensembl"/>
</dbReference>
<dbReference type="GO" id="GO:0000978">
    <property type="term" value="F:RNA polymerase II cis-regulatory region sequence-specific DNA binding"/>
    <property type="evidence" value="ECO:0000314"/>
    <property type="project" value="MGI"/>
</dbReference>
<dbReference type="GO" id="GO:0000977">
    <property type="term" value="F:RNA polymerase II transcription regulatory region sequence-specific DNA binding"/>
    <property type="evidence" value="ECO:0000314"/>
    <property type="project" value="MGI"/>
</dbReference>
<dbReference type="GO" id="GO:0021987">
    <property type="term" value="P:cerebral cortex development"/>
    <property type="evidence" value="ECO:0000315"/>
    <property type="project" value="MGI"/>
</dbReference>
<dbReference type="GO" id="GO:0060598">
    <property type="term" value="P:dichotomous subdivision of terminal units involved in mammary gland duct morphogenesis"/>
    <property type="evidence" value="ECO:0000315"/>
    <property type="project" value="MGI"/>
</dbReference>
<dbReference type="GO" id="GO:0030855">
    <property type="term" value="P:epithelial cell differentiation"/>
    <property type="evidence" value="ECO:0000315"/>
    <property type="project" value="MGI"/>
</dbReference>
<dbReference type="GO" id="GO:0060750">
    <property type="term" value="P:epithelial cell proliferation involved in mammary gland duct elongation"/>
    <property type="evidence" value="ECO:0000315"/>
    <property type="project" value="MGI"/>
</dbReference>
<dbReference type="GO" id="GO:0021877">
    <property type="term" value="P:forebrain neuron fate commitment"/>
    <property type="evidence" value="ECO:0000315"/>
    <property type="project" value="MGI"/>
</dbReference>
<dbReference type="GO" id="GO:0030718">
    <property type="term" value="P:germ-line stem cell population maintenance"/>
    <property type="evidence" value="ECO:0000315"/>
    <property type="project" value="MGI"/>
</dbReference>
<dbReference type="GO" id="GO:0001942">
    <property type="term" value="P:hair follicle development"/>
    <property type="evidence" value="ECO:0000316"/>
    <property type="project" value="MGI"/>
</dbReference>
<dbReference type="GO" id="GO:0001826">
    <property type="term" value="P:inner cell mass cell differentiation"/>
    <property type="evidence" value="ECO:0000315"/>
    <property type="project" value="UniProtKB"/>
</dbReference>
<dbReference type="GO" id="GO:0003334">
    <property type="term" value="P:keratinocyte development"/>
    <property type="evidence" value="ECO:0000316"/>
    <property type="project" value="MGI"/>
</dbReference>
<dbReference type="GO" id="GO:0008584">
    <property type="term" value="P:male gonad development"/>
    <property type="evidence" value="ECO:0007669"/>
    <property type="project" value="Ensembl"/>
</dbReference>
<dbReference type="GO" id="GO:0140001">
    <property type="term" value="P:morula formation"/>
    <property type="evidence" value="ECO:0000314"/>
    <property type="project" value="UniProtKB"/>
</dbReference>
<dbReference type="GO" id="GO:0045814">
    <property type="term" value="P:negative regulation of gene expression, epigenetic"/>
    <property type="evidence" value="ECO:0007669"/>
    <property type="project" value="Ensembl"/>
</dbReference>
<dbReference type="GO" id="GO:0045944">
    <property type="term" value="P:positive regulation of transcription by RNA polymerase II"/>
    <property type="evidence" value="ECO:0000314"/>
    <property type="project" value="MGI"/>
</dbReference>
<dbReference type="GO" id="GO:0006355">
    <property type="term" value="P:regulation of DNA-templated transcription"/>
    <property type="evidence" value="ECO:0000315"/>
    <property type="project" value="MGI"/>
</dbReference>
<dbReference type="GO" id="GO:0045682">
    <property type="term" value="P:regulation of epidermis development"/>
    <property type="evidence" value="ECO:0000315"/>
    <property type="project" value="MGI"/>
</dbReference>
<dbReference type="GO" id="GO:0006357">
    <property type="term" value="P:regulation of transcription by RNA polymerase II"/>
    <property type="evidence" value="ECO:0000314"/>
    <property type="project" value="MGI"/>
</dbReference>
<dbReference type="GO" id="GO:0048733">
    <property type="term" value="P:sebaceous gland development"/>
    <property type="evidence" value="ECO:0000316"/>
    <property type="project" value="MGI"/>
</dbReference>
<dbReference type="GO" id="GO:0043588">
    <property type="term" value="P:skin development"/>
    <property type="evidence" value="ECO:0000316"/>
    <property type="project" value="MGI"/>
</dbReference>
<dbReference type="GO" id="GO:0035019">
    <property type="term" value="P:somatic stem cell population maintenance"/>
    <property type="evidence" value="ECO:0000315"/>
    <property type="project" value="MGI"/>
</dbReference>
<dbReference type="GO" id="GO:0048863">
    <property type="term" value="P:stem cell differentiation"/>
    <property type="evidence" value="ECO:0000315"/>
    <property type="project" value="MGI"/>
</dbReference>
<dbReference type="GO" id="GO:0019827">
    <property type="term" value="P:stem cell population maintenance"/>
    <property type="evidence" value="ECO:0000314"/>
    <property type="project" value="MGI"/>
</dbReference>
<dbReference type="GO" id="GO:0006366">
    <property type="term" value="P:transcription by RNA polymerase II"/>
    <property type="evidence" value="ECO:0000314"/>
    <property type="project" value="MGI"/>
</dbReference>
<dbReference type="GO" id="GO:0001829">
    <property type="term" value="P:trophectodermal cell differentiation"/>
    <property type="evidence" value="ECO:0000315"/>
    <property type="project" value="UniProtKB"/>
</dbReference>
<dbReference type="InterPro" id="IPR004979">
    <property type="entry name" value="TF_AP2"/>
</dbReference>
<dbReference type="InterPro" id="IPR013854">
    <property type="entry name" value="TF_AP2_C"/>
</dbReference>
<dbReference type="InterPro" id="IPR008123">
    <property type="entry name" value="TF_AP2_gamma"/>
</dbReference>
<dbReference type="PANTHER" id="PTHR10812">
    <property type="entry name" value="TRANSCRIPTION FACTOR AP-2"/>
    <property type="match status" value="1"/>
</dbReference>
<dbReference type="PANTHER" id="PTHR10812:SF9">
    <property type="entry name" value="TRANSCRIPTION FACTOR AP-2 GAMMA"/>
    <property type="match status" value="1"/>
</dbReference>
<dbReference type="Pfam" id="PF03299">
    <property type="entry name" value="TF_AP-2"/>
    <property type="match status" value="1"/>
</dbReference>
<dbReference type="PRINTS" id="PR01751">
    <property type="entry name" value="AP2CTNSCPFCT"/>
</dbReference>
<dbReference type="PRINTS" id="PR01748">
    <property type="entry name" value="AP2TNSCPFCT"/>
</dbReference>
<accession>Q61312</accession>
<accession>Q99L72</accession>
<comment type="function">
    <text evidence="5 6">Sequence-specific DNA-binding transcription factor that interacts with cellular enhancer elements to regulate transcription of selected genes, and which plays a key role in early embryonic development (PubMed:38243114, PubMed:8660922). AP-2 factors bind to the consensus sequence 5'-GCCNNNGGC-3' and activate genes involved in a large spectrum of important biological functions (PubMed:38243114, PubMed:8660922). TFAP2C plays a key role in early embryonic development by regulating both inner cell mass (ICM) and trophectoderm differentiation (PubMed:38243114). At the 8-cell stage, during morula development, controls expression of cell-polarity genes (PubMed:38243114). Upon trophoblast commitment, binds to late trophectoderm genes in blastocysts together with CDX2, and later to extra-embryonic ectoderm genes together with SOX2 (PubMed:38243114). Binds to both closed and open chromatin with other transcription factors (PubMed:38243114).</text>
</comment>
<comment type="subunit">
    <text evidence="2 4">Binds DNA as a dimer (By similarity). Can form homodimers or heterodimers with other AP-2 family members (By similarity). Interacts with WWOX (By similarity). Interacts with UBE2I (By similarity). Interacts with KCTD1; this interaction represses transcription activation (By similarity). Interacts with CITED2 (via C-terminus); the interaction stimulates TFAP2B-transcriptional activity (By similarity). Interacts with CITED4 (PubMed:12504852). Interacts with MTA1 (By similarity).</text>
</comment>
<comment type="subcellular location">
    <subcellularLocation>
        <location evidence="2">Nucleus</location>
    </subcellularLocation>
</comment>
<comment type="tissue specificity">
    <text evidence="6">Expressed in lung, ovary and testis. Expressed in most squamous epithelia. Also, detected in several exocrine glands including the prostate, the preputial and salivary glands, serous glands of the tongue and ocular harderian glands.</text>
</comment>
<comment type="induction">
    <text evidence="6">During retinoic acid-mediated differentiation.</text>
</comment>
<comment type="domain">
    <text evidence="2">The PPxY motif mediates interaction with WWOX.</text>
</comment>
<comment type="PTM">
    <text evidence="2">Sumoylated on Lys-10; which inhibits transcriptional activity.</text>
</comment>
<comment type="similarity">
    <text evidence="9">Belongs to the AP-2 family.</text>
</comment>
<name>AP2C_MOUSE</name>
<evidence type="ECO:0000250" key="1"/>
<evidence type="ECO:0000250" key="2">
    <source>
        <dbReference type="UniProtKB" id="Q92754"/>
    </source>
</evidence>
<evidence type="ECO:0000256" key="3">
    <source>
        <dbReference type="SAM" id="MobiDB-lite"/>
    </source>
</evidence>
<evidence type="ECO:0000269" key="4">
    <source>
    </source>
</evidence>
<evidence type="ECO:0000269" key="5">
    <source>
    </source>
</evidence>
<evidence type="ECO:0000269" key="6">
    <source>
    </source>
</evidence>
<evidence type="ECO:0000303" key="7">
    <source>
    </source>
</evidence>
<evidence type="ECO:0000303" key="8">
    <source>
    </source>
</evidence>
<evidence type="ECO:0000305" key="9"/>
<organism>
    <name type="scientific">Mus musculus</name>
    <name type="common">Mouse</name>
    <dbReference type="NCBI Taxonomy" id="10090"/>
    <lineage>
        <taxon>Eukaryota</taxon>
        <taxon>Metazoa</taxon>
        <taxon>Chordata</taxon>
        <taxon>Craniata</taxon>
        <taxon>Vertebrata</taxon>
        <taxon>Euteleostomi</taxon>
        <taxon>Mammalia</taxon>
        <taxon>Eutheria</taxon>
        <taxon>Euarchontoglires</taxon>
        <taxon>Glires</taxon>
        <taxon>Rodentia</taxon>
        <taxon>Myomorpha</taxon>
        <taxon>Muroidea</taxon>
        <taxon>Muridae</taxon>
        <taxon>Murinae</taxon>
        <taxon>Mus</taxon>
        <taxon>Mus</taxon>
    </lineage>
</organism>
<gene>
    <name evidence="7" type="primary">Tfap2c</name>
    <name type="synonym">Tcfap2c</name>
</gene>
<sequence>MLWKITDNVKYEEDCEDRHDSSSNGNPRIPHLSSPGQHLYSPAPPLSHTGVAEYQPPPYFPPPYQQLAYSQSADHYSHLGEAYAAAMNPLHQPAATGSQQQAWPGRQSQEGSSLASHHSRSASLIPHISGLEGGSVSARREVYRRSDLLLPHAHALEAGLAENLGLHEMAHPIEEVQNVDDAHLLLHDQTVIRKGPISMTKNPLGLPCQKDLVGVVMNPSEVFCSVPGRLSLLSSTSKYKVTVAEVQRRLSPPECLNASLLGGVLRRAKSKNGGRSLREKLDKIGLNLPAGRRKAAHVTLLTSLVEGEAVHLARDFAYVCEAEFPSKAVADYLTRPHLGGRNEMATRKSMLLAAQQVCKEFTDLLHQDRTPNGNNRPAQVLEPNIQNCLSHFSLITHGFGSQAICAAVSAVQNYIKEALIAIDKSYMNPGDQSPADSSKTMEKMEKHRK</sequence>
<proteinExistence type="evidence at protein level"/>
<protein>
    <recommendedName>
        <fullName>Transcription factor AP-2 gamma</fullName>
        <shortName>AP2-gamma</shortName>
    </recommendedName>
    <alternativeName>
        <fullName evidence="8">AP-2.2</fullName>
    </alternativeName>
    <alternativeName>
        <fullName>Activating enhancer-binding protein 2 gamma</fullName>
    </alternativeName>
</protein>
<feature type="chain" id="PRO_0000184804" description="Transcription factor AP-2 gamma">
    <location>
        <begin position="1"/>
        <end position="449"/>
    </location>
</feature>
<feature type="region of interest" description="Disordered" evidence="3">
    <location>
        <begin position="13"/>
        <end position="58"/>
    </location>
</feature>
<feature type="region of interest" description="Disordered" evidence="3">
    <location>
        <begin position="94"/>
        <end position="130"/>
    </location>
</feature>
<feature type="region of interest" description="H-S-H (helix-span-helix), dimerization">
    <location>
        <begin position="292"/>
        <end position="423"/>
    </location>
</feature>
<feature type="region of interest" description="Disordered" evidence="3">
    <location>
        <begin position="426"/>
        <end position="449"/>
    </location>
</feature>
<feature type="short sequence motif" description="PPxY motif">
    <location>
        <begin position="59"/>
        <end position="64"/>
    </location>
</feature>
<feature type="compositionally biased region" description="Polar residues" evidence="3">
    <location>
        <begin position="95"/>
        <end position="111"/>
    </location>
</feature>
<feature type="compositionally biased region" description="Low complexity" evidence="3">
    <location>
        <begin position="112"/>
        <end position="124"/>
    </location>
</feature>
<feature type="compositionally biased region" description="Basic and acidic residues" evidence="3">
    <location>
        <begin position="439"/>
        <end position="449"/>
    </location>
</feature>
<feature type="modified residue" description="Phosphoserine; by PKA" evidence="1">
    <location>
        <position position="251"/>
    </location>
</feature>
<feature type="modified residue" description="Phosphoserine" evidence="2">
    <location>
        <position position="433"/>
    </location>
</feature>
<feature type="cross-link" description="Glycyl lysine isopeptide (Lys-Gly) (interchain with G-Cter in SUMO)" evidence="2">
    <location>
        <position position="10"/>
    </location>
</feature>
<feature type="sequence conflict" description="In Ref. 1; CAA64357." evidence="9" ref="1">
    <original>LA</original>
    <variation>VV</variation>
    <location>
        <begin position="67"/>
        <end position="68"/>
    </location>
</feature>